<evidence type="ECO:0000255" key="1">
    <source>
        <dbReference type="HAMAP-Rule" id="MF_01694"/>
    </source>
</evidence>
<evidence type="ECO:0000255" key="2">
    <source>
        <dbReference type="PROSITE-ProRule" id="PRU01266"/>
    </source>
</evidence>
<name>BIOB_LEPBJ</name>
<feature type="chain" id="PRO_0000381443" description="Biotin synthase">
    <location>
        <begin position="1"/>
        <end position="358"/>
    </location>
</feature>
<feature type="domain" description="Radical SAM core" evidence="2">
    <location>
        <begin position="55"/>
        <end position="278"/>
    </location>
</feature>
<feature type="binding site" evidence="1">
    <location>
        <position position="70"/>
    </location>
    <ligand>
        <name>[4Fe-4S] cluster</name>
        <dbReference type="ChEBI" id="CHEBI:49883"/>
        <note>4Fe-4S-S-AdoMet</note>
    </ligand>
</feature>
<feature type="binding site" evidence="1">
    <location>
        <position position="74"/>
    </location>
    <ligand>
        <name>[4Fe-4S] cluster</name>
        <dbReference type="ChEBI" id="CHEBI:49883"/>
        <note>4Fe-4S-S-AdoMet</note>
    </ligand>
</feature>
<feature type="binding site" evidence="1">
    <location>
        <position position="77"/>
    </location>
    <ligand>
        <name>[4Fe-4S] cluster</name>
        <dbReference type="ChEBI" id="CHEBI:49883"/>
        <note>4Fe-4S-S-AdoMet</note>
    </ligand>
</feature>
<feature type="binding site" evidence="1">
    <location>
        <position position="114"/>
    </location>
    <ligand>
        <name>[2Fe-2S] cluster</name>
        <dbReference type="ChEBI" id="CHEBI:190135"/>
    </ligand>
</feature>
<feature type="binding site" evidence="1">
    <location>
        <position position="146"/>
    </location>
    <ligand>
        <name>[2Fe-2S] cluster</name>
        <dbReference type="ChEBI" id="CHEBI:190135"/>
    </ligand>
</feature>
<feature type="binding site" evidence="1">
    <location>
        <position position="206"/>
    </location>
    <ligand>
        <name>[2Fe-2S] cluster</name>
        <dbReference type="ChEBI" id="CHEBI:190135"/>
    </ligand>
</feature>
<feature type="binding site" evidence="1">
    <location>
        <position position="276"/>
    </location>
    <ligand>
        <name>[2Fe-2S] cluster</name>
        <dbReference type="ChEBI" id="CHEBI:190135"/>
    </ligand>
</feature>
<keyword id="KW-0001">2Fe-2S</keyword>
<keyword id="KW-0004">4Fe-4S</keyword>
<keyword id="KW-0093">Biotin biosynthesis</keyword>
<keyword id="KW-0408">Iron</keyword>
<keyword id="KW-0411">Iron-sulfur</keyword>
<keyword id="KW-0479">Metal-binding</keyword>
<keyword id="KW-0949">S-adenosyl-L-methionine</keyword>
<keyword id="KW-0808">Transferase</keyword>
<comment type="function">
    <text evidence="1">Catalyzes the conversion of dethiobiotin (DTB) to biotin by the insertion of a sulfur atom into dethiobiotin via a radical-based mechanism.</text>
</comment>
<comment type="catalytic activity">
    <reaction evidence="1">
        <text>(4R,5S)-dethiobiotin + (sulfur carrier)-SH + 2 reduced [2Fe-2S]-[ferredoxin] + 2 S-adenosyl-L-methionine = (sulfur carrier)-H + biotin + 2 5'-deoxyadenosine + 2 L-methionine + 2 oxidized [2Fe-2S]-[ferredoxin]</text>
        <dbReference type="Rhea" id="RHEA:22060"/>
        <dbReference type="Rhea" id="RHEA-COMP:10000"/>
        <dbReference type="Rhea" id="RHEA-COMP:10001"/>
        <dbReference type="Rhea" id="RHEA-COMP:14737"/>
        <dbReference type="Rhea" id="RHEA-COMP:14739"/>
        <dbReference type="ChEBI" id="CHEBI:17319"/>
        <dbReference type="ChEBI" id="CHEBI:29917"/>
        <dbReference type="ChEBI" id="CHEBI:33737"/>
        <dbReference type="ChEBI" id="CHEBI:33738"/>
        <dbReference type="ChEBI" id="CHEBI:57586"/>
        <dbReference type="ChEBI" id="CHEBI:57844"/>
        <dbReference type="ChEBI" id="CHEBI:59789"/>
        <dbReference type="ChEBI" id="CHEBI:64428"/>
        <dbReference type="ChEBI" id="CHEBI:149473"/>
        <dbReference type="EC" id="2.8.1.6"/>
    </reaction>
</comment>
<comment type="cofactor">
    <cofactor evidence="1">
        <name>[4Fe-4S] cluster</name>
        <dbReference type="ChEBI" id="CHEBI:49883"/>
    </cofactor>
    <text evidence="1">Binds 1 [4Fe-4S] cluster. The cluster is coordinated with 3 cysteines and an exchangeable S-adenosyl-L-methionine.</text>
</comment>
<comment type="cofactor">
    <cofactor evidence="1">
        <name>[2Fe-2S] cluster</name>
        <dbReference type="ChEBI" id="CHEBI:190135"/>
    </cofactor>
    <text evidence="1">Binds 1 [2Fe-2S] cluster. The cluster is coordinated with 3 cysteines and 1 arginine.</text>
</comment>
<comment type="pathway">
    <text evidence="1">Cofactor biosynthesis; biotin biosynthesis; biotin from 7,8-diaminononanoate: step 2/2.</text>
</comment>
<comment type="subunit">
    <text evidence="1">Homodimer.</text>
</comment>
<comment type="similarity">
    <text evidence="1">Belongs to the radical SAM superfamily. Biotin synthase family.</text>
</comment>
<proteinExistence type="inferred from homology"/>
<gene>
    <name evidence="1" type="primary">bioB</name>
    <name type="ordered locus">LBJ_1870</name>
</gene>
<protein>
    <recommendedName>
        <fullName evidence="1">Biotin synthase</fullName>
        <ecNumber evidence="1">2.8.1.6</ecNumber>
    </recommendedName>
</protein>
<organism>
    <name type="scientific">Leptospira borgpetersenii serovar Hardjo-bovis (strain JB197)</name>
    <dbReference type="NCBI Taxonomy" id="355277"/>
    <lineage>
        <taxon>Bacteria</taxon>
        <taxon>Pseudomonadati</taxon>
        <taxon>Spirochaetota</taxon>
        <taxon>Spirochaetia</taxon>
        <taxon>Leptospirales</taxon>
        <taxon>Leptospiraceae</taxon>
        <taxon>Leptospira</taxon>
    </lineage>
</organism>
<dbReference type="EC" id="2.8.1.6" evidence="1"/>
<dbReference type="EMBL" id="CP000350">
    <property type="protein sequence ID" value="ABJ76391.1"/>
    <property type="molecule type" value="Genomic_DNA"/>
</dbReference>
<dbReference type="SMR" id="Q04RS9"/>
<dbReference type="KEGG" id="lbj:LBJ_1870"/>
<dbReference type="HOGENOM" id="CLU_033172_2_1_12"/>
<dbReference type="UniPathway" id="UPA00078">
    <property type="reaction ID" value="UER00162"/>
</dbReference>
<dbReference type="Proteomes" id="UP000000656">
    <property type="component" value="Chromosome 1"/>
</dbReference>
<dbReference type="GO" id="GO:0051537">
    <property type="term" value="F:2 iron, 2 sulfur cluster binding"/>
    <property type="evidence" value="ECO:0007669"/>
    <property type="project" value="UniProtKB-KW"/>
</dbReference>
<dbReference type="GO" id="GO:0051539">
    <property type="term" value="F:4 iron, 4 sulfur cluster binding"/>
    <property type="evidence" value="ECO:0007669"/>
    <property type="project" value="UniProtKB-KW"/>
</dbReference>
<dbReference type="GO" id="GO:0004076">
    <property type="term" value="F:biotin synthase activity"/>
    <property type="evidence" value="ECO:0007669"/>
    <property type="project" value="UniProtKB-UniRule"/>
</dbReference>
<dbReference type="GO" id="GO:0005506">
    <property type="term" value="F:iron ion binding"/>
    <property type="evidence" value="ECO:0007669"/>
    <property type="project" value="UniProtKB-UniRule"/>
</dbReference>
<dbReference type="GO" id="GO:0009102">
    <property type="term" value="P:biotin biosynthetic process"/>
    <property type="evidence" value="ECO:0007669"/>
    <property type="project" value="UniProtKB-UniRule"/>
</dbReference>
<dbReference type="CDD" id="cd01335">
    <property type="entry name" value="Radical_SAM"/>
    <property type="match status" value="1"/>
</dbReference>
<dbReference type="FunFam" id="3.20.20.70:FF:000026">
    <property type="entry name" value="Biotin synthase"/>
    <property type="match status" value="1"/>
</dbReference>
<dbReference type="Gene3D" id="3.20.20.70">
    <property type="entry name" value="Aldolase class I"/>
    <property type="match status" value="1"/>
</dbReference>
<dbReference type="HAMAP" id="MF_01694">
    <property type="entry name" value="BioB"/>
    <property type="match status" value="1"/>
</dbReference>
<dbReference type="InterPro" id="IPR013785">
    <property type="entry name" value="Aldolase_TIM"/>
</dbReference>
<dbReference type="InterPro" id="IPR010722">
    <property type="entry name" value="BATS_dom"/>
</dbReference>
<dbReference type="InterPro" id="IPR002684">
    <property type="entry name" value="Biotin_synth/BioAB"/>
</dbReference>
<dbReference type="InterPro" id="IPR024177">
    <property type="entry name" value="Biotin_synthase"/>
</dbReference>
<dbReference type="InterPro" id="IPR006638">
    <property type="entry name" value="Elp3/MiaA/NifB-like_rSAM"/>
</dbReference>
<dbReference type="InterPro" id="IPR007197">
    <property type="entry name" value="rSAM"/>
</dbReference>
<dbReference type="NCBIfam" id="TIGR00433">
    <property type="entry name" value="bioB"/>
    <property type="match status" value="1"/>
</dbReference>
<dbReference type="PANTHER" id="PTHR22976">
    <property type="entry name" value="BIOTIN SYNTHASE"/>
    <property type="match status" value="1"/>
</dbReference>
<dbReference type="PANTHER" id="PTHR22976:SF2">
    <property type="entry name" value="BIOTIN SYNTHASE, MITOCHONDRIAL"/>
    <property type="match status" value="1"/>
</dbReference>
<dbReference type="Pfam" id="PF06968">
    <property type="entry name" value="BATS"/>
    <property type="match status" value="1"/>
</dbReference>
<dbReference type="Pfam" id="PF04055">
    <property type="entry name" value="Radical_SAM"/>
    <property type="match status" value="1"/>
</dbReference>
<dbReference type="PIRSF" id="PIRSF001619">
    <property type="entry name" value="Biotin_synth"/>
    <property type="match status" value="1"/>
</dbReference>
<dbReference type="SFLD" id="SFLDG01060">
    <property type="entry name" value="BATS_domain_containing"/>
    <property type="match status" value="1"/>
</dbReference>
<dbReference type="SFLD" id="SFLDG01278">
    <property type="entry name" value="biotin_synthase_like"/>
    <property type="match status" value="1"/>
</dbReference>
<dbReference type="SMART" id="SM00876">
    <property type="entry name" value="BATS"/>
    <property type="match status" value="1"/>
</dbReference>
<dbReference type="SMART" id="SM00729">
    <property type="entry name" value="Elp3"/>
    <property type="match status" value="1"/>
</dbReference>
<dbReference type="SUPFAM" id="SSF102114">
    <property type="entry name" value="Radical SAM enzymes"/>
    <property type="match status" value="1"/>
</dbReference>
<dbReference type="PROSITE" id="PS51918">
    <property type="entry name" value="RADICAL_SAM"/>
    <property type="match status" value="1"/>
</dbReference>
<sequence>MSEKMYATLKTAEKIFSEISSVITKQEGLEILNGSIPLTTCLDKAFQERNRYFYNKVRIHILDNIKNGYCPEDCGYCAQRKNANSGIKEYPMKSEAEIYEDAVQAKKNGAYRFCMVTSGTGPNRLTTERLASTIRRITNELGMKVCLSAGLLDEEKAQVLKSAGLDRYNHNLNTSENHYPEICDTHTYAQRTQTLDSVSKAGIGMCSGVIVGMGESFQDIVDMAFELKSFRVISIPVNFFIPVKGHAIKNPGILTPELCVRILCLFRLVNPDSEIRIAAGREGHLRSLSAMALFAANSLFSSGYLNVKGSEIIETVTMIRDAGFVPELVDGGILPEESGTEMLYSEKNFPELYKFKKS</sequence>
<accession>Q04RS9</accession>
<reference key="1">
    <citation type="journal article" date="2006" name="Proc. Natl. Acad. Sci. U.S.A.">
        <title>Genome reduction in Leptospira borgpetersenii reflects limited transmission potential.</title>
        <authorList>
            <person name="Bulach D.M."/>
            <person name="Zuerner R.L."/>
            <person name="Wilson P."/>
            <person name="Seemann T."/>
            <person name="McGrath A."/>
            <person name="Cullen P.A."/>
            <person name="Davis J."/>
            <person name="Johnson M."/>
            <person name="Kuczek E."/>
            <person name="Alt D.P."/>
            <person name="Peterson-Burch B."/>
            <person name="Coppel R.L."/>
            <person name="Rood J.I."/>
            <person name="Davies J.K."/>
            <person name="Adler B."/>
        </authorList>
    </citation>
    <scope>NUCLEOTIDE SEQUENCE [LARGE SCALE GENOMIC DNA]</scope>
    <source>
        <strain>JB197</strain>
    </source>
</reference>